<reference key="1">
    <citation type="journal article" date="2005" name="J. Bacteriol.">
        <title>Insights on evolution of virulence and resistance from the complete genome analysis of an early methicillin-resistant Staphylococcus aureus strain and a biofilm-producing methicillin-resistant Staphylococcus epidermidis strain.</title>
        <authorList>
            <person name="Gill S.R."/>
            <person name="Fouts D.E."/>
            <person name="Archer G.L."/>
            <person name="Mongodin E.F."/>
            <person name="DeBoy R.T."/>
            <person name="Ravel J."/>
            <person name="Paulsen I.T."/>
            <person name="Kolonay J.F."/>
            <person name="Brinkac L.M."/>
            <person name="Beanan M.J."/>
            <person name="Dodson R.J."/>
            <person name="Daugherty S.C."/>
            <person name="Madupu R."/>
            <person name="Angiuoli S.V."/>
            <person name="Durkin A.S."/>
            <person name="Haft D.H."/>
            <person name="Vamathevan J.J."/>
            <person name="Khouri H."/>
            <person name="Utterback T.R."/>
            <person name="Lee C."/>
            <person name="Dimitrov G."/>
            <person name="Jiang L."/>
            <person name="Qin H."/>
            <person name="Weidman J."/>
            <person name="Tran K."/>
            <person name="Kang K.H."/>
            <person name="Hance I.R."/>
            <person name="Nelson K.E."/>
            <person name="Fraser C.M."/>
        </authorList>
    </citation>
    <scope>NUCLEOTIDE SEQUENCE [LARGE SCALE GENOMIC DNA]</scope>
    <source>
        <strain>COL</strain>
    </source>
</reference>
<protein>
    <recommendedName>
        <fullName evidence="1">Putative pyruvate, phosphate dikinase regulatory protein</fullName>
        <shortName evidence="1">PPDK regulatory protein</shortName>
        <ecNumber evidence="1">2.7.11.32</ecNumber>
        <ecNumber evidence="1">2.7.4.27</ecNumber>
    </recommendedName>
</protein>
<dbReference type="EC" id="2.7.11.32" evidence="1"/>
<dbReference type="EC" id="2.7.4.27" evidence="1"/>
<dbReference type="EMBL" id="CP000046">
    <property type="protein sequence ID" value="AAW38236.1"/>
    <property type="molecule type" value="Genomic_DNA"/>
</dbReference>
<dbReference type="RefSeq" id="WP_000411299.1">
    <property type="nucleotide sequence ID" value="NZ_JBGOFO010000003.1"/>
</dbReference>
<dbReference type="SMR" id="Q5HFJ7"/>
<dbReference type="KEGG" id="sac:SACOL1620"/>
<dbReference type="HOGENOM" id="CLU_046206_2_1_9"/>
<dbReference type="Proteomes" id="UP000000530">
    <property type="component" value="Chromosome"/>
</dbReference>
<dbReference type="GO" id="GO:0043531">
    <property type="term" value="F:ADP binding"/>
    <property type="evidence" value="ECO:0007669"/>
    <property type="project" value="UniProtKB-UniRule"/>
</dbReference>
<dbReference type="GO" id="GO:0005524">
    <property type="term" value="F:ATP binding"/>
    <property type="evidence" value="ECO:0007669"/>
    <property type="project" value="InterPro"/>
</dbReference>
<dbReference type="GO" id="GO:0016776">
    <property type="term" value="F:phosphotransferase activity, phosphate group as acceptor"/>
    <property type="evidence" value="ECO:0007669"/>
    <property type="project" value="UniProtKB-UniRule"/>
</dbReference>
<dbReference type="GO" id="GO:0004674">
    <property type="term" value="F:protein serine/threonine kinase activity"/>
    <property type="evidence" value="ECO:0007669"/>
    <property type="project" value="UniProtKB-UniRule"/>
</dbReference>
<dbReference type="HAMAP" id="MF_00921">
    <property type="entry name" value="PDRP"/>
    <property type="match status" value="1"/>
</dbReference>
<dbReference type="InterPro" id="IPR005177">
    <property type="entry name" value="Kinase-pyrophosphorylase"/>
</dbReference>
<dbReference type="InterPro" id="IPR026565">
    <property type="entry name" value="PPDK_reg"/>
</dbReference>
<dbReference type="NCBIfam" id="NF003742">
    <property type="entry name" value="PRK05339.1"/>
    <property type="match status" value="1"/>
</dbReference>
<dbReference type="PANTHER" id="PTHR31756">
    <property type="entry name" value="PYRUVATE, PHOSPHATE DIKINASE REGULATORY PROTEIN 1, CHLOROPLASTIC"/>
    <property type="match status" value="1"/>
</dbReference>
<dbReference type="PANTHER" id="PTHR31756:SF3">
    <property type="entry name" value="PYRUVATE, PHOSPHATE DIKINASE REGULATORY PROTEIN 1, CHLOROPLASTIC"/>
    <property type="match status" value="1"/>
</dbReference>
<dbReference type="Pfam" id="PF03618">
    <property type="entry name" value="Kinase-PPPase"/>
    <property type="match status" value="1"/>
</dbReference>
<comment type="function">
    <text evidence="1">Bifunctional serine/threonine kinase and phosphorylase involved in the regulation of the pyruvate, phosphate dikinase (PPDK) by catalyzing its phosphorylation/dephosphorylation.</text>
</comment>
<comment type="catalytic activity">
    <reaction evidence="1">
        <text>N(tele)-phospho-L-histidyl/L-threonyl-[pyruvate, phosphate dikinase] + ADP = N(tele)-phospho-L-histidyl/O-phospho-L-threonyl-[pyruvate, phosphate dikinase] + AMP + H(+)</text>
        <dbReference type="Rhea" id="RHEA:43692"/>
        <dbReference type="Rhea" id="RHEA-COMP:10650"/>
        <dbReference type="Rhea" id="RHEA-COMP:10651"/>
        <dbReference type="ChEBI" id="CHEBI:15378"/>
        <dbReference type="ChEBI" id="CHEBI:30013"/>
        <dbReference type="ChEBI" id="CHEBI:61977"/>
        <dbReference type="ChEBI" id="CHEBI:83586"/>
        <dbReference type="ChEBI" id="CHEBI:456215"/>
        <dbReference type="ChEBI" id="CHEBI:456216"/>
        <dbReference type="EC" id="2.7.11.32"/>
    </reaction>
</comment>
<comment type="catalytic activity">
    <reaction evidence="1">
        <text>N(tele)-phospho-L-histidyl/O-phospho-L-threonyl-[pyruvate, phosphate dikinase] + phosphate + H(+) = N(tele)-phospho-L-histidyl/L-threonyl-[pyruvate, phosphate dikinase] + diphosphate</text>
        <dbReference type="Rhea" id="RHEA:43696"/>
        <dbReference type="Rhea" id="RHEA-COMP:10650"/>
        <dbReference type="Rhea" id="RHEA-COMP:10651"/>
        <dbReference type="ChEBI" id="CHEBI:15378"/>
        <dbReference type="ChEBI" id="CHEBI:30013"/>
        <dbReference type="ChEBI" id="CHEBI:33019"/>
        <dbReference type="ChEBI" id="CHEBI:43474"/>
        <dbReference type="ChEBI" id="CHEBI:61977"/>
        <dbReference type="ChEBI" id="CHEBI:83586"/>
        <dbReference type="EC" id="2.7.4.27"/>
    </reaction>
</comment>
<comment type="similarity">
    <text evidence="1">Belongs to the pyruvate, phosphate/water dikinase regulatory protein family. PDRP subfamily.</text>
</comment>
<sequence length="272" mass="30784">MEKIKIIVASDSIGETAELVARAGISQFNPKQCKNELLRYPYIESFEDVDEVIQVAKDTNAIIVYTLIKPEMKQYMSEKVAEFQLKSVDIMGPLMDLLSASVEEKPYNEPGIVHRLDDAYFKKIDAIEFAVKYDDGKDPKGLPKADIVLLGISRTSKTPLSQYLAHKSYKVMNVPIVPEVTPPDGLYDINPKKCIALKISEEKLNRIRKERLKQLGLGDTARYATEARIQEELNYFEEIVSEIGCPVIDVSQKAIEETANDIIHYIEQNKSK</sequence>
<keyword id="KW-0418">Kinase</keyword>
<keyword id="KW-0547">Nucleotide-binding</keyword>
<keyword id="KW-0723">Serine/threonine-protein kinase</keyword>
<keyword id="KW-0808">Transferase</keyword>
<name>PDRP_STAAC</name>
<feature type="chain" id="PRO_0000196715" description="Putative pyruvate, phosphate dikinase regulatory protein">
    <location>
        <begin position="1"/>
        <end position="272"/>
    </location>
</feature>
<feature type="binding site" evidence="1">
    <location>
        <begin position="151"/>
        <end position="158"/>
    </location>
    <ligand>
        <name>ADP</name>
        <dbReference type="ChEBI" id="CHEBI:456216"/>
    </ligand>
</feature>
<accession>Q5HFJ7</accession>
<organism>
    <name type="scientific">Staphylococcus aureus (strain COL)</name>
    <dbReference type="NCBI Taxonomy" id="93062"/>
    <lineage>
        <taxon>Bacteria</taxon>
        <taxon>Bacillati</taxon>
        <taxon>Bacillota</taxon>
        <taxon>Bacilli</taxon>
        <taxon>Bacillales</taxon>
        <taxon>Staphylococcaceae</taxon>
        <taxon>Staphylococcus</taxon>
    </lineage>
</organism>
<proteinExistence type="inferred from homology"/>
<evidence type="ECO:0000255" key="1">
    <source>
        <dbReference type="HAMAP-Rule" id="MF_00921"/>
    </source>
</evidence>
<gene>
    <name type="ordered locus">SACOL1620</name>
</gene>